<comment type="subunit">
    <text evidence="1">Homodimer.</text>
</comment>
<comment type="similarity">
    <text evidence="1">Belongs to the UPF0210 family.</text>
</comment>
<dbReference type="EMBL" id="AL157959">
    <property type="protein sequence ID" value="CAM09024.1"/>
    <property type="molecule type" value="Genomic_DNA"/>
</dbReference>
<dbReference type="PIR" id="E81818">
    <property type="entry name" value="E81818"/>
</dbReference>
<dbReference type="RefSeq" id="WP_002239219.1">
    <property type="nucleotide sequence ID" value="NC_003116.1"/>
</dbReference>
<dbReference type="SMR" id="Q9JTA4"/>
<dbReference type="EnsemblBacteria" id="CAM09024">
    <property type="protein sequence ID" value="CAM09024"/>
    <property type="gene ID" value="NMA1908"/>
</dbReference>
<dbReference type="KEGG" id="nma:NMA1908"/>
<dbReference type="HOGENOM" id="CLU_048704_0_0_4"/>
<dbReference type="Proteomes" id="UP000000626">
    <property type="component" value="Chromosome"/>
</dbReference>
<dbReference type="CDD" id="cd08025">
    <property type="entry name" value="RNR_PFL_like_DUF711"/>
    <property type="match status" value="1"/>
</dbReference>
<dbReference type="Gene3D" id="3.20.70.20">
    <property type="match status" value="1"/>
</dbReference>
<dbReference type="HAMAP" id="MF_01221">
    <property type="entry name" value="UPF0210"/>
    <property type="match status" value="1"/>
</dbReference>
<dbReference type="InterPro" id="IPR007841">
    <property type="entry name" value="UPF0210"/>
</dbReference>
<dbReference type="NCBIfam" id="NF003700">
    <property type="entry name" value="PRK05313.1"/>
    <property type="match status" value="1"/>
</dbReference>
<dbReference type="PANTHER" id="PTHR37560:SF1">
    <property type="entry name" value="UPF0210 PROTEIN MJ1665"/>
    <property type="match status" value="1"/>
</dbReference>
<dbReference type="PANTHER" id="PTHR37560">
    <property type="entry name" value="UPF0210 PROTEIN SPR0218"/>
    <property type="match status" value="1"/>
</dbReference>
<dbReference type="Pfam" id="PF05167">
    <property type="entry name" value="DUF711"/>
    <property type="match status" value="1"/>
</dbReference>
<dbReference type="SUPFAM" id="SSF51998">
    <property type="entry name" value="PFL-like glycyl radical enzymes"/>
    <property type="match status" value="1"/>
</dbReference>
<gene>
    <name type="ordered locus">NMA1908</name>
</gene>
<evidence type="ECO:0000255" key="1">
    <source>
        <dbReference type="HAMAP-Rule" id="MF_01221"/>
    </source>
</evidence>
<accession>Q9JTA4</accession>
<accession>A1ITB1</accession>
<proteinExistence type="inferred from homology"/>
<sequence length="451" mass="46472">MSIQSGEILETVKMVADQNFDVRTITIGIDLHDCISTDIDVLNQNIYNKITTVGKDLVATAKYLSAKYGVPIVNQRISVTPIAQIAAATHADSYVSVAQTLDKAAKAIGVSFIGGFSALVQKGMSPSDEVLIRSIPEAMKTTDIVCSSINIGSTRAGINMDAVRLAGETIKRTAEITLEGFGCAKIVVFCNAVEDNPFMAGAFHGSGEADAVINVGVSGPGVVKAALENSDATTLTEVAEVVKKTAFKITRVGELIGREASKMLNIPFGILDLSLAPTPAVGDSVARILEEMGLSVCGTHGTTAALALLNDAVKKGGMMASSAVGGLSGAFIPVSEDEGMIAAAEAGVLTLDKLEAMTAVCSVGLDMIAVPGDTPAHTISGIIADEAAIGMINSKTTAVRIIPVTGKTVGDSVEFGGLLGYAPVMPVKEGSCEVFVNRGGRIPAPVQSMKN</sequence>
<organism>
    <name type="scientific">Neisseria meningitidis serogroup A / serotype 4A (strain DSM 15465 / Z2491)</name>
    <dbReference type="NCBI Taxonomy" id="122587"/>
    <lineage>
        <taxon>Bacteria</taxon>
        <taxon>Pseudomonadati</taxon>
        <taxon>Pseudomonadota</taxon>
        <taxon>Betaproteobacteria</taxon>
        <taxon>Neisseriales</taxon>
        <taxon>Neisseriaceae</taxon>
        <taxon>Neisseria</taxon>
    </lineage>
</organism>
<feature type="chain" id="PRO_0000070559" description="UPF0210 protein NMA1908">
    <location>
        <begin position="1"/>
        <end position="451"/>
    </location>
</feature>
<name>Y1908_NEIMA</name>
<protein>
    <recommendedName>
        <fullName evidence="1">UPF0210 protein NMA1908</fullName>
    </recommendedName>
</protein>
<reference key="1">
    <citation type="journal article" date="2000" name="Nature">
        <title>Complete DNA sequence of a serogroup A strain of Neisseria meningitidis Z2491.</title>
        <authorList>
            <person name="Parkhill J."/>
            <person name="Achtman M."/>
            <person name="James K.D."/>
            <person name="Bentley S.D."/>
            <person name="Churcher C.M."/>
            <person name="Klee S.R."/>
            <person name="Morelli G."/>
            <person name="Basham D."/>
            <person name="Brown D."/>
            <person name="Chillingworth T."/>
            <person name="Davies R.M."/>
            <person name="Davis P."/>
            <person name="Devlin K."/>
            <person name="Feltwell T."/>
            <person name="Hamlin N."/>
            <person name="Holroyd S."/>
            <person name="Jagels K."/>
            <person name="Leather S."/>
            <person name="Moule S."/>
            <person name="Mungall K.L."/>
            <person name="Quail M.A."/>
            <person name="Rajandream M.A."/>
            <person name="Rutherford K.M."/>
            <person name="Simmonds M."/>
            <person name="Skelton J."/>
            <person name="Whitehead S."/>
            <person name="Spratt B.G."/>
            <person name="Barrell B.G."/>
        </authorList>
    </citation>
    <scope>NUCLEOTIDE SEQUENCE [LARGE SCALE GENOMIC DNA]</scope>
    <source>
        <strain>DSM 15465 / Z2491</strain>
    </source>
</reference>